<protein>
    <recommendedName>
        <fullName evidence="1">Ribulose bisphosphate carboxylase large chain</fullName>
        <shortName evidence="1">RuBisCO large subunit</shortName>
        <ecNumber evidence="1">4.1.1.39</ecNumber>
    </recommendedName>
</protein>
<feature type="propeptide" id="PRO_0000031253" evidence="1">
    <location>
        <begin position="1"/>
        <end position="2"/>
    </location>
</feature>
<feature type="chain" id="PRO_0000031254" description="Ribulose bisphosphate carboxylase large chain">
    <location>
        <begin position="3"/>
        <end position="453" status="greater than"/>
    </location>
</feature>
<feature type="active site" description="Proton acceptor" evidence="1">
    <location>
        <position position="175"/>
    </location>
</feature>
<feature type="active site" description="Proton acceptor" evidence="1">
    <location>
        <position position="294"/>
    </location>
</feature>
<feature type="binding site" description="in homodimeric partner" evidence="1">
    <location>
        <position position="123"/>
    </location>
    <ligand>
        <name>substrate</name>
    </ligand>
</feature>
<feature type="binding site" evidence="1">
    <location>
        <position position="173"/>
    </location>
    <ligand>
        <name>substrate</name>
    </ligand>
</feature>
<feature type="binding site" evidence="1">
    <location>
        <position position="177"/>
    </location>
    <ligand>
        <name>substrate</name>
    </ligand>
</feature>
<feature type="binding site" description="via carbamate group" evidence="1">
    <location>
        <position position="201"/>
    </location>
    <ligand>
        <name>Mg(2+)</name>
        <dbReference type="ChEBI" id="CHEBI:18420"/>
    </ligand>
</feature>
<feature type="binding site" evidence="1">
    <location>
        <position position="203"/>
    </location>
    <ligand>
        <name>Mg(2+)</name>
        <dbReference type="ChEBI" id="CHEBI:18420"/>
    </ligand>
</feature>
<feature type="binding site" evidence="1">
    <location>
        <position position="204"/>
    </location>
    <ligand>
        <name>Mg(2+)</name>
        <dbReference type="ChEBI" id="CHEBI:18420"/>
    </ligand>
</feature>
<feature type="binding site" evidence="1">
    <location>
        <position position="295"/>
    </location>
    <ligand>
        <name>substrate</name>
    </ligand>
</feature>
<feature type="binding site" evidence="1">
    <location>
        <position position="327"/>
    </location>
    <ligand>
        <name>substrate</name>
    </ligand>
</feature>
<feature type="binding site" evidence="1">
    <location>
        <position position="379"/>
    </location>
    <ligand>
        <name>substrate</name>
    </ligand>
</feature>
<feature type="site" description="Transition state stabilizer" evidence="1">
    <location>
        <position position="334"/>
    </location>
</feature>
<feature type="modified residue" description="N-acetylproline" evidence="1">
    <location>
        <position position="3"/>
    </location>
</feature>
<feature type="modified residue" description="N6,N6,N6-trimethyllysine" evidence="1">
    <location>
        <position position="14"/>
    </location>
</feature>
<feature type="modified residue" description="N6-carboxylysine" evidence="1">
    <location>
        <position position="201"/>
    </location>
</feature>
<feature type="disulfide bond" description="Interchain; in linked form" evidence="1">
    <location>
        <position position="247"/>
    </location>
</feature>
<feature type="non-terminal residue">
    <location>
        <position position="453"/>
    </location>
</feature>
<dbReference type="EC" id="4.1.1.39" evidence="1"/>
<dbReference type="EMBL" id="X81099">
    <property type="protein sequence ID" value="CAA57005.1"/>
    <property type="molecule type" value="Genomic_DNA"/>
</dbReference>
<dbReference type="SMR" id="Q32397"/>
<dbReference type="GO" id="GO:0009507">
    <property type="term" value="C:chloroplast"/>
    <property type="evidence" value="ECO:0007669"/>
    <property type="project" value="UniProtKB-SubCell"/>
</dbReference>
<dbReference type="GO" id="GO:0000287">
    <property type="term" value="F:magnesium ion binding"/>
    <property type="evidence" value="ECO:0007669"/>
    <property type="project" value="InterPro"/>
</dbReference>
<dbReference type="GO" id="GO:0004497">
    <property type="term" value="F:monooxygenase activity"/>
    <property type="evidence" value="ECO:0007669"/>
    <property type="project" value="UniProtKB-KW"/>
</dbReference>
<dbReference type="GO" id="GO:0016984">
    <property type="term" value="F:ribulose-bisphosphate carboxylase activity"/>
    <property type="evidence" value="ECO:0007669"/>
    <property type="project" value="UniProtKB-EC"/>
</dbReference>
<dbReference type="GO" id="GO:0009853">
    <property type="term" value="P:photorespiration"/>
    <property type="evidence" value="ECO:0007669"/>
    <property type="project" value="UniProtKB-KW"/>
</dbReference>
<dbReference type="GO" id="GO:0019253">
    <property type="term" value="P:reductive pentose-phosphate cycle"/>
    <property type="evidence" value="ECO:0007669"/>
    <property type="project" value="UniProtKB-KW"/>
</dbReference>
<dbReference type="CDD" id="cd08212">
    <property type="entry name" value="RuBisCO_large_I"/>
    <property type="match status" value="1"/>
</dbReference>
<dbReference type="FunFam" id="3.20.20.110:FF:000003">
    <property type="entry name" value="Ribulose bisphosphate carboxylase large chain"/>
    <property type="match status" value="1"/>
</dbReference>
<dbReference type="FunFam" id="3.30.70.150:FF:000001">
    <property type="entry name" value="Ribulose bisphosphate carboxylase large chain"/>
    <property type="match status" value="1"/>
</dbReference>
<dbReference type="Gene3D" id="3.20.20.110">
    <property type="entry name" value="Ribulose bisphosphate carboxylase, large subunit, C-terminal domain"/>
    <property type="match status" value="1"/>
</dbReference>
<dbReference type="Gene3D" id="3.30.70.150">
    <property type="entry name" value="RuBisCO large subunit, N-terminal domain"/>
    <property type="match status" value="1"/>
</dbReference>
<dbReference type="HAMAP" id="MF_01338">
    <property type="entry name" value="RuBisCO_L_type1"/>
    <property type="match status" value="1"/>
</dbReference>
<dbReference type="InterPro" id="IPR033966">
    <property type="entry name" value="RuBisCO"/>
</dbReference>
<dbReference type="InterPro" id="IPR020878">
    <property type="entry name" value="RuBisCo_large_chain_AS"/>
</dbReference>
<dbReference type="InterPro" id="IPR000685">
    <property type="entry name" value="RuBisCO_lsu_C"/>
</dbReference>
<dbReference type="InterPro" id="IPR036376">
    <property type="entry name" value="RuBisCO_lsu_C_sf"/>
</dbReference>
<dbReference type="InterPro" id="IPR017443">
    <property type="entry name" value="RuBisCO_lsu_fd_N"/>
</dbReference>
<dbReference type="InterPro" id="IPR036422">
    <property type="entry name" value="RuBisCO_lsu_N_sf"/>
</dbReference>
<dbReference type="InterPro" id="IPR020888">
    <property type="entry name" value="RuBisCO_lsuI"/>
</dbReference>
<dbReference type="NCBIfam" id="NF003252">
    <property type="entry name" value="PRK04208.1"/>
    <property type="match status" value="1"/>
</dbReference>
<dbReference type="PANTHER" id="PTHR42704">
    <property type="entry name" value="RIBULOSE BISPHOSPHATE CARBOXYLASE"/>
    <property type="match status" value="1"/>
</dbReference>
<dbReference type="PANTHER" id="PTHR42704:SF15">
    <property type="entry name" value="RIBULOSE BISPHOSPHATE CARBOXYLASE LARGE CHAIN"/>
    <property type="match status" value="1"/>
</dbReference>
<dbReference type="Pfam" id="PF00016">
    <property type="entry name" value="RuBisCO_large"/>
    <property type="match status" value="1"/>
</dbReference>
<dbReference type="Pfam" id="PF02788">
    <property type="entry name" value="RuBisCO_large_N"/>
    <property type="match status" value="1"/>
</dbReference>
<dbReference type="SFLD" id="SFLDG01052">
    <property type="entry name" value="RuBisCO"/>
    <property type="match status" value="1"/>
</dbReference>
<dbReference type="SFLD" id="SFLDS00014">
    <property type="entry name" value="RuBisCO"/>
    <property type="match status" value="1"/>
</dbReference>
<dbReference type="SFLD" id="SFLDG00301">
    <property type="entry name" value="RuBisCO-like_proteins"/>
    <property type="match status" value="1"/>
</dbReference>
<dbReference type="SUPFAM" id="SSF51649">
    <property type="entry name" value="RuBisCo, C-terminal domain"/>
    <property type="match status" value="1"/>
</dbReference>
<dbReference type="SUPFAM" id="SSF54966">
    <property type="entry name" value="RuBisCO, large subunit, small (N-terminal) domain"/>
    <property type="match status" value="1"/>
</dbReference>
<dbReference type="PROSITE" id="PS00157">
    <property type="entry name" value="RUBISCO_LARGE"/>
    <property type="match status" value="1"/>
</dbReference>
<reference key="1">
    <citation type="journal article" date="1995" name="J. Mol. Evol.">
        <title>Comparison of the evolution of ribulose-1, 5-biphosphate carboxylase (rbcL) and atpB-rbcL noncoding spacer sequences in a recent plant group, the tribe Rubieae (Rubiaceae).</title>
        <authorList>
            <person name="Manen J.F."/>
            <person name="Natali A."/>
        </authorList>
    </citation>
    <scope>NUCLEOTIDE SEQUENCE [GENOMIC DNA]</scope>
</reference>
<name>RBL_HYDFO</name>
<evidence type="ECO:0000255" key="1">
    <source>
        <dbReference type="HAMAP-Rule" id="MF_01338"/>
    </source>
</evidence>
<sequence>MSPQTETKASVGFKAGVKEYKLTYYTPEYQTKDTDILAAFRVTPQPGVPPEERGAAVAAESSTGTWTTVWTDGLTSLDRYKGRCYHIEPVAGEENQYIAYVAYPLDLFEEGSVTNMFTSIVGNVFGFKALRALRLEDLRIPIAYVKTFQGPPHGIQVERDKLNKYGRPLLGCTIKPKLGLSAKNYGRAVYECLRGGLDFTKDDENVNSQPFMRWRDRFLFCAEALFKAQAETGEIKGHYLNATAGTCEEMMKRAVFARELGTPIVMHDYLTGGFTANTTLAHYCRDNGLLLHIHRAMHAVIDRQKNHGMHFRVLAKALRMSGGDHIHAGTVVGKLEGERDITLGFVDLLRDDYIEKDRSRGIYFTQDWVSLPGVIPVASRGIHVWHMPALTEIFGDDSVLQFGGGTLGHPWGNAPGAVANRVALEACVKARNEGRDLAAEGTLVIREARKWSP</sequence>
<comment type="function">
    <text evidence="1">RuBisCO catalyzes two reactions: the carboxylation of D-ribulose 1,5-bisphosphate, the primary event in carbon dioxide fixation, as well as the oxidative fragmentation of the pentose substrate in the photorespiration process. Both reactions occur simultaneously and in competition at the same active site.</text>
</comment>
<comment type="catalytic activity">
    <reaction evidence="1">
        <text>2 (2R)-3-phosphoglycerate + 2 H(+) = D-ribulose 1,5-bisphosphate + CO2 + H2O</text>
        <dbReference type="Rhea" id="RHEA:23124"/>
        <dbReference type="ChEBI" id="CHEBI:15377"/>
        <dbReference type="ChEBI" id="CHEBI:15378"/>
        <dbReference type="ChEBI" id="CHEBI:16526"/>
        <dbReference type="ChEBI" id="CHEBI:57870"/>
        <dbReference type="ChEBI" id="CHEBI:58272"/>
        <dbReference type="EC" id="4.1.1.39"/>
    </reaction>
</comment>
<comment type="catalytic activity">
    <reaction evidence="1">
        <text>D-ribulose 1,5-bisphosphate + O2 = 2-phosphoglycolate + (2R)-3-phosphoglycerate + 2 H(+)</text>
        <dbReference type="Rhea" id="RHEA:36631"/>
        <dbReference type="ChEBI" id="CHEBI:15378"/>
        <dbReference type="ChEBI" id="CHEBI:15379"/>
        <dbReference type="ChEBI" id="CHEBI:57870"/>
        <dbReference type="ChEBI" id="CHEBI:58033"/>
        <dbReference type="ChEBI" id="CHEBI:58272"/>
    </reaction>
</comment>
<comment type="cofactor">
    <cofactor evidence="1">
        <name>Mg(2+)</name>
        <dbReference type="ChEBI" id="CHEBI:18420"/>
    </cofactor>
    <text evidence="1">Binds 1 Mg(2+) ion per subunit.</text>
</comment>
<comment type="subunit">
    <text evidence="1">Heterohexadecamer of 8 large chains and 8 small chains; disulfide-linked. The disulfide link is formed within the large subunit homodimers.</text>
</comment>
<comment type="subcellular location">
    <subcellularLocation>
        <location>Plastid</location>
        <location>Chloroplast</location>
    </subcellularLocation>
</comment>
<comment type="PTM">
    <text evidence="1">The disulfide bond which can form in the large chain dimeric partners within the hexadecamer appears to be associated with oxidative stress and protein turnover.</text>
</comment>
<comment type="miscellaneous">
    <text evidence="1">The basic functional RuBisCO is composed of a large chain homodimer in a 'head-to-tail' conformation. In form I RuBisCO this homodimer is arranged in a barrel-like tetramer with the small subunits forming a tetrameric 'cap' on each end of the 'barrel'.</text>
</comment>
<comment type="similarity">
    <text evidence="1">Belongs to the RuBisCO large chain family. Type I subfamily.</text>
</comment>
<keyword id="KW-0007">Acetylation</keyword>
<keyword id="KW-0113">Calvin cycle</keyword>
<keyword id="KW-0120">Carbon dioxide fixation</keyword>
<keyword id="KW-0150">Chloroplast</keyword>
<keyword id="KW-1015">Disulfide bond</keyword>
<keyword id="KW-0456">Lyase</keyword>
<keyword id="KW-0460">Magnesium</keyword>
<keyword id="KW-0479">Metal-binding</keyword>
<keyword id="KW-0488">Methylation</keyword>
<keyword id="KW-0503">Monooxygenase</keyword>
<keyword id="KW-0560">Oxidoreductase</keyword>
<keyword id="KW-0601">Photorespiration</keyword>
<keyword id="KW-0602">Photosynthesis</keyword>
<keyword id="KW-0934">Plastid</keyword>
<organism>
    <name type="scientific">Hydnophytum formicarum</name>
    <name type="common">Ant plant</name>
    <dbReference type="NCBI Taxonomy" id="29797"/>
    <lineage>
        <taxon>Eukaryota</taxon>
        <taxon>Viridiplantae</taxon>
        <taxon>Streptophyta</taxon>
        <taxon>Embryophyta</taxon>
        <taxon>Tracheophyta</taxon>
        <taxon>Spermatophyta</taxon>
        <taxon>Magnoliopsida</taxon>
        <taxon>eudicotyledons</taxon>
        <taxon>Gunneridae</taxon>
        <taxon>Pentapetalae</taxon>
        <taxon>asterids</taxon>
        <taxon>lamiids</taxon>
        <taxon>Gentianales</taxon>
        <taxon>Rubiaceae</taxon>
        <taxon>Rubioideae</taxon>
        <taxon>Psychotrieae</taxon>
        <taxon>Hydnophytum</taxon>
    </lineage>
</organism>
<gene>
    <name evidence="1" type="primary">rbcL</name>
</gene>
<proteinExistence type="inferred from homology"/>
<accession>Q32397</accession>
<geneLocation type="chloroplast"/>